<accession>P54508</accession>
<keyword id="KW-1185">Reference proteome</keyword>
<gene>
    <name type="primary">yqhG</name>
    <name type="ordered locus">BSU24590</name>
</gene>
<sequence>MRQQEVHDFLLRFFQANSCQIVDQGLGYMTVQLTVEMDKQIMNRPFYWHWREKTGGDPNPMKITFITDKENAPKDLDGEFIYFGAPRLFQIFKAVKQNGRFTRMYEKIESAGAKVPLQPWLGINVTISYQSDMKKDKLLSLGLHLVSGTIIEDFQSKLTQFSLTSQICDYCFTISPMIKPESGLKRMENYISKSAMQEPSDWAEQAVNRWKNDMTLLDKFYEHIEEKPEEYHLEKQALKTLYQPKISVEIENGGLFYLQNNISS</sequence>
<proteinExistence type="predicted"/>
<feature type="chain" id="PRO_0000049818" description="Uncharacterized protein YqhG">
    <location>
        <begin position="1"/>
        <end position="264"/>
    </location>
</feature>
<protein>
    <recommendedName>
        <fullName>Uncharacterized protein YqhG</fullName>
    </recommendedName>
</protein>
<name>YQHG_BACSU</name>
<reference key="1">
    <citation type="journal article" date="1996" name="Microbiology">
        <title>Systematic sequencing of the 283 kb 210 degrees-232 degrees region of the Bacillus subtilis genome containing the skin element and many sporulation genes.</title>
        <authorList>
            <person name="Mizuno M."/>
            <person name="Masuda S."/>
            <person name="Takemaru K."/>
            <person name="Hosono S."/>
            <person name="Sato T."/>
            <person name="Takeuchi M."/>
            <person name="Kobayashi Y."/>
        </authorList>
    </citation>
    <scope>NUCLEOTIDE SEQUENCE [GENOMIC DNA]</scope>
    <source>
        <strain>168 / JH642</strain>
    </source>
</reference>
<reference key="2">
    <citation type="journal article" date="1997" name="Nature">
        <title>The complete genome sequence of the Gram-positive bacterium Bacillus subtilis.</title>
        <authorList>
            <person name="Kunst F."/>
            <person name="Ogasawara N."/>
            <person name="Moszer I."/>
            <person name="Albertini A.M."/>
            <person name="Alloni G."/>
            <person name="Azevedo V."/>
            <person name="Bertero M.G."/>
            <person name="Bessieres P."/>
            <person name="Bolotin A."/>
            <person name="Borchert S."/>
            <person name="Borriss R."/>
            <person name="Boursier L."/>
            <person name="Brans A."/>
            <person name="Braun M."/>
            <person name="Brignell S.C."/>
            <person name="Bron S."/>
            <person name="Brouillet S."/>
            <person name="Bruschi C.V."/>
            <person name="Caldwell B."/>
            <person name="Capuano V."/>
            <person name="Carter N.M."/>
            <person name="Choi S.-K."/>
            <person name="Codani J.-J."/>
            <person name="Connerton I.F."/>
            <person name="Cummings N.J."/>
            <person name="Daniel R.A."/>
            <person name="Denizot F."/>
            <person name="Devine K.M."/>
            <person name="Duesterhoeft A."/>
            <person name="Ehrlich S.D."/>
            <person name="Emmerson P.T."/>
            <person name="Entian K.-D."/>
            <person name="Errington J."/>
            <person name="Fabret C."/>
            <person name="Ferrari E."/>
            <person name="Foulger D."/>
            <person name="Fritz C."/>
            <person name="Fujita M."/>
            <person name="Fujita Y."/>
            <person name="Fuma S."/>
            <person name="Galizzi A."/>
            <person name="Galleron N."/>
            <person name="Ghim S.-Y."/>
            <person name="Glaser P."/>
            <person name="Goffeau A."/>
            <person name="Golightly E.J."/>
            <person name="Grandi G."/>
            <person name="Guiseppi G."/>
            <person name="Guy B.J."/>
            <person name="Haga K."/>
            <person name="Haiech J."/>
            <person name="Harwood C.R."/>
            <person name="Henaut A."/>
            <person name="Hilbert H."/>
            <person name="Holsappel S."/>
            <person name="Hosono S."/>
            <person name="Hullo M.-F."/>
            <person name="Itaya M."/>
            <person name="Jones L.-M."/>
            <person name="Joris B."/>
            <person name="Karamata D."/>
            <person name="Kasahara Y."/>
            <person name="Klaerr-Blanchard M."/>
            <person name="Klein C."/>
            <person name="Kobayashi Y."/>
            <person name="Koetter P."/>
            <person name="Koningstein G."/>
            <person name="Krogh S."/>
            <person name="Kumano M."/>
            <person name="Kurita K."/>
            <person name="Lapidus A."/>
            <person name="Lardinois S."/>
            <person name="Lauber J."/>
            <person name="Lazarevic V."/>
            <person name="Lee S.-M."/>
            <person name="Levine A."/>
            <person name="Liu H."/>
            <person name="Masuda S."/>
            <person name="Mauel C."/>
            <person name="Medigue C."/>
            <person name="Medina N."/>
            <person name="Mellado R.P."/>
            <person name="Mizuno M."/>
            <person name="Moestl D."/>
            <person name="Nakai S."/>
            <person name="Noback M."/>
            <person name="Noone D."/>
            <person name="O'Reilly M."/>
            <person name="Ogawa K."/>
            <person name="Ogiwara A."/>
            <person name="Oudega B."/>
            <person name="Park S.-H."/>
            <person name="Parro V."/>
            <person name="Pohl T.M."/>
            <person name="Portetelle D."/>
            <person name="Porwollik S."/>
            <person name="Prescott A.M."/>
            <person name="Presecan E."/>
            <person name="Pujic P."/>
            <person name="Purnelle B."/>
            <person name="Rapoport G."/>
            <person name="Rey M."/>
            <person name="Reynolds S."/>
            <person name="Rieger M."/>
            <person name="Rivolta C."/>
            <person name="Rocha E."/>
            <person name="Roche B."/>
            <person name="Rose M."/>
            <person name="Sadaie Y."/>
            <person name="Sato T."/>
            <person name="Scanlan E."/>
            <person name="Schleich S."/>
            <person name="Schroeter R."/>
            <person name="Scoffone F."/>
            <person name="Sekiguchi J."/>
            <person name="Sekowska A."/>
            <person name="Seror S.J."/>
            <person name="Serror P."/>
            <person name="Shin B.-S."/>
            <person name="Soldo B."/>
            <person name="Sorokin A."/>
            <person name="Tacconi E."/>
            <person name="Takagi T."/>
            <person name="Takahashi H."/>
            <person name="Takemaru K."/>
            <person name="Takeuchi M."/>
            <person name="Tamakoshi A."/>
            <person name="Tanaka T."/>
            <person name="Terpstra P."/>
            <person name="Tognoni A."/>
            <person name="Tosato V."/>
            <person name="Uchiyama S."/>
            <person name="Vandenbol M."/>
            <person name="Vannier F."/>
            <person name="Vassarotti A."/>
            <person name="Viari A."/>
            <person name="Wambutt R."/>
            <person name="Wedler E."/>
            <person name="Wedler H."/>
            <person name="Weitzenegger T."/>
            <person name="Winters P."/>
            <person name="Wipat A."/>
            <person name="Yamamoto H."/>
            <person name="Yamane K."/>
            <person name="Yasumoto K."/>
            <person name="Yata K."/>
            <person name="Yoshida K."/>
            <person name="Yoshikawa H.-F."/>
            <person name="Zumstein E."/>
            <person name="Yoshikawa H."/>
            <person name="Danchin A."/>
        </authorList>
    </citation>
    <scope>NUCLEOTIDE SEQUENCE [LARGE SCALE GENOMIC DNA]</scope>
    <source>
        <strain>168</strain>
    </source>
</reference>
<dbReference type="EMBL" id="D84432">
    <property type="protein sequence ID" value="BAA12544.1"/>
    <property type="molecule type" value="Genomic_DNA"/>
</dbReference>
<dbReference type="EMBL" id="AL009126">
    <property type="protein sequence ID" value="CAB14390.1"/>
    <property type="molecule type" value="Genomic_DNA"/>
</dbReference>
<dbReference type="PIR" id="F69958">
    <property type="entry name" value="F69958"/>
</dbReference>
<dbReference type="RefSeq" id="NP_390339.1">
    <property type="nucleotide sequence ID" value="NC_000964.3"/>
</dbReference>
<dbReference type="RefSeq" id="WP_003230200.1">
    <property type="nucleotide sequence ID" value="NZ_OZ025638.1"/>
</dbReference>
<dbReference type="FunCoup" id="P54508">
    <property type="interactions" value="2"/>
</dbReference>
<dbReference type="STRING" id="224308.BSU24590"/>
<dbReference type="PaxDb" id="224308-BSU24590"/>
<dbReference type="EnsemblBacteria" id="CAB14390">
    <property type="protein sequence ID" value="CAB14390"/>
    <property type="gene ID" value="BSU_24590"/>
</dbReference>
<dbReference type="GeneID" id="938541"/>
<dbReference type="KEGG" id="bsu:BSU24590"/>
<dbReference type="PATRIC" id="fig|224308.179.peg.2677"/>
<dbReference type="eggNOG" id="ENOG502Z821">
    <property type="taxonomic scope" value="Bacteria"/>
</dbReference>
<dbReference type="InParanoid" id="P54508"/>
<dbReference type="OrthoDB" id="2433584at2"/>
<dbReference type="BioCyc" id="BSUB:BSU24590-MONOMER"/>
<dbReference type="Proteomes" id="UP000001570">
    <property type="component" value="Chromosome"/>
</dbReference>
<dbReference type="InterPro" id="IPR024562">
    <property type="entry name" value="YqhG"/>
</dbReference>
<dbReference type="Pfam" id="PF11079">
    <property type="entry name" value="YqhG"/>
    <property type="match status" value="1"/>
</dbReference>
<organism>
    <name type="scientific">Bacillus subtilis (strain 168)</name>
    <dbReference type="NCBI Taxonomy" id="224308"/>
    <lineage>
        <taxon>Bacteria</taxon>
        <taxon>Bacillati</taxon>
        <taxon>Bacillota</taxon>
        <taxon>Bacilli</taxon>
        <taxon>Bacillales</taxon>
        <taxon>Bacillaceae</taxon>
        <taxon>Bacillus</taxon>
    </lineage>
</organism>